<sequence>MPDLLLELRSEEIPARMQRKAAGDLKKLVTDALVERGLTYEGAREYWTPRRLTLDIRGLNARSADVREEKKGPRTDANEKAIEGFLRGAGLNDISEAQVVSDPKKGDFYIAIINKPGRPAEEIIAEVMPGIIRSFPWPKSMRSGPASMPKGSSYAGIEGKGSESLRWVRPLQSIVCLFGPEHDETQVIPFVIDGIVAGNITYGHRFHAPGPITVRRFEDYVSNLEKAKVILDADRRKDIILHDAKDLAFANGLELVEDEGLLEEVSGLVEWPQVLMGTFEEDYLQIPAEIIRLTIKTNQKCFVTRNQGAEEGLSNRFILISNIEASDGGKEIIHGNGKVVRARLSDARHFWNRDQGDLPDLETLKDSAAKFDLDLKKPLDQRMAKLDALNVTFHAKLGTQGERVARIRELAKALAPVVGADGALVDRAVVLAKADLRTEAVGEFPELQGLMGRKYAVLQGENESVAAAIEDHYKPQGPSDRLPADKVAITVALADKLDTLVGFWAIDEKPTGSKDPFALRRAALGVVRILLEKNVRLPLLSVARDSDLLSFFHDRLKVYLRDLGARYDLIDAVLTPESDDLLMIARRVEALTAFITGEDGRNLLAGAKRATQLLAAEEKKGTVVADGVSEELLKLDAEKALYAAIKTASADAAKAVEGEDFRSAMQALSTLRAPVDKFFEDVLVNDEDAAIRANRLALLKAIREATGTVADFSKITG</sequence>
<comment type="catalytic activity">
    <reaction evidence="1">
        <text>tRNA(Gly) + glycine + ATP = glycyl-tRNA(Gly) + AMP + diphosphate</text>
        <dbReference type="Rhea" id="RHEA:16013"/>
        <dbReference type="Rhea" id="RHEA-COMP:9664"/>
        <dbReference type="Rhea" id="RHEA-COMP:9683"/>
        <dbReference type="ChEBI" id="CHEBI:30616"/>
        <dbReference type="ChEBI" id="CHEBI:33019"/>
        <dbReference type="ChEBI" id="CHEBI:57305"/>
        <dbReference type="ChEBI" id="CHEBI:78442"/>
        <dbReference type="ChEBI" id="CHEBI:78522"/>
        <dbReference type="ChEBI" id="CHEBI:456215"/>
        <dbReference type="EC" id="6.1.1.14"/>
    </reaction>
</comment>
<comment type="subunit">
    <text evidence="1">Tetramer of two alpha and two beta subunits.</text>
</comment>
<comment type="subcellular location">
    <subcellularLocation>
        <location evidence="1">Cytoplasm</location>
    </subcellularLocation>
</comment>
<comment type="similarity">
    <text evidence="1">Belongs to the class-II aminoacyl-tRNA synthetase family.</text>
</comment>
<gene>
    <name evidence="1" type="primary">glyS</name>
    <name type="ordered locus">Atu0644</name>
    <name type="ORF">AGR_C_1144</name>
</gene>
<reference key="1">
    <citation type="journal article" date="2001" name="Science">
        <title>Genome sequence of the plant pathogen and biotechnology agent Agrobacterium tumefaciens C58.</title>
        <authorList>
            <person name="Goodner B."/>
            <person name="Hinkle G."/>
            <person name="Gattung S."/>
            <person name="Miller N."/>
            <person name="Blanchard M."/>
            <person name="Qurollo B."/>
            <person name="Goldman B.S."/>
            <person name="Cao Y."/>
            <person name="Askenazi M."/>
            <person name="Halling C."/>
            <person name="Mullin L."/>
            <person name="Houmiel K."/>
            <person name="Gordon J."/>
            <person name="Vaudin M."/>
            <person name="Iartchouk O."/>
            <person name="Epp A."/>
            <person name="Liu F."/>
            <person name="Wollam C."/>
            <person name="Allinger M."/>
            <person name="Doughty D."/>
            <person name="Scott C."/>
            <person name="Lappas C."/>
            <person name="Markelz B."/>
            <person name="Flanagan C."/>
            <person name="Crowell C."/>
            <person name="Gurson J."/>
            <person name="Lomo C."/>
            <person name="Sear C."/>
            <person name="Strub G."/>
            <person name="Cielo C."/>
            <person name="Slater S."/>
        </authorList>
    </citation>
    <scope>NUCLEOTIDE SEQUENCE [LARGE SCALE GENOMIC DNA]</scope>
    <source>
        <strain>C58 / ATCC 33970</strain>
    </source>
</reference>
<reference key="2">
    <citation type="journal article" date="2001" name="Science">
        <title>The genome of the natural genetic engineer Agrobacterium tumefaciens C58.</title>
        <authorList>
            <person name="Wood D.W."/>
            <person name="Setubal J.C."/>
            <person name="Kaul R."/>
            <person name="Monks D.E."/>
            <person name="Kitajima J.P."/>
            <person name="Okura V.K."/>
            <person name="Zhou Y."/>
            <person name="Chen L."/>
            <person name="Wood G.E."/>
            <person name="Almeida N.F. Jr."/>
            <person name="Woo L."/>
            <person name="Chen Y."/>
            <person name="Paulsen I.T."/>
            <person name="Eisen J.A."/>
            <person name="Karp P.D."/>
            <person name="Bovee D. Sr."/>
            <person name="Chapman P."/>
            <person name="Clendenning J."/>
            <person name="Deatherage G."/>
            <person name="Gillet W."/>
            <person name="Grant C."/>
            <person name="Kutyavin T."/>
            <person name="Levy R."/>
            <person name="Li M.-J."/>
            <person name="McClelland E."/>
            <person name="Palmieri A."/>
            <person name="Raymond C."/>
            <person name="Rouse G."/>
            <person name="Saenphimmachak C."/>
            <person name="Wu Z."/>
            <person name="Romero P."/>
            <person name="Gordon D."/>
            <person name="Zhang S."/>
            <person name="Yoo H."/>
            <person name="Tao Y."/>
            <person name="Biddle P."/>
            <person name="Jung M."/>
            <person name="Krespan W."/>
            <person name="Perry M."/>
            <person name="Gordon-Kamm B."/>
            <person name="Liao L."/>
            <person name="Kim S."/>
            <person name="Hendrick C."/>
            <person name="Zhao Z.-Y."/>
            <person name="Dolan M."/>
            <person name="Chumley F."/>
            <person name="Tingey S.V."/>
            <person name="Tomb J.-F."/>
            <person name="Gordon M.P."/>
            <person name="Olson M.V."/>
            <person name="Nester E.W."/>
        </authorList>
    </citation>
    <scope>NUCLEOTIDE SEQUENCE [LARGE SCALE GENOMIC DNA]</scope>
    <source>
        <strain>C58 / ATCC 33970</strain>
    </source>
</reference>
<name>SYGB_AGRFC</name>
<organism>
    <name type="scientific">Agrobacterium fabrum (strain C58 / ATCC 33970)</name>
    <name type="common">Agrobacterium tumefaciens (strain C58)</name>
    <dbReference type="NCBI Taxonomy" id="176299"/>
    <lineage>
        <taxon>Bacteria</taxon>
        <taxon>Pseudomonadati</taxon>
        <taxon>Pseudomonadota</taxon>
        <taxon>Alphaproteobacteria</taxon>
        <taxon>Hyphomicrobiales</taxon>
        <taxon>Rhizobiaceae</taxon>
        <taxon>Rhizobium/Agrobacterium group</taxon>
        <taxon>Agrobacterium</taxon>
        <taxon>Agrobacterium tumefaciens complex</taxon>
    </lineage>
</organism>
<dbReference type="EC" id="6.1.1.14" evidence="1"/>
<dbReference type="EMBL" id="AE007869">
    <property type="protein sequence ID" value="AAK86451.1"/>
    <property type="molecule type" value="Genomic_DNA"/>
</dbReference>
<dbReference type="PIR" id="AF2655">
    <property type="entry name" value="AF2655"/>
</dbReference>
<dbReference type="PIR" id="B97437">
    <property type="entry name" value="B97437"/>
</dbReference>
<dbReference type="RefSeq" id="NP_353666.1">
    <property type="nucleotide sequence ID" value="NC_003062.2"/>
</dbReference>
<dbReference type="RefSeq" id="WP_010971033.1">
    <property type="nucleotide sequence ID" value="NC_003062.2"/>
</dbReference>
<dbReference type="SMR" id="A9CK39"/>
<dbReference type="STRING" id="176299.Atu0644"/>
<dbReference type="EnsemblBacteria" id="AAK86451">
    <property type="protein sequence ID" value="AAK86451"/>
    <property type="gene ID" value="Atu0644"/>
</dbReference>
<dbReference type="GeneID" id="1132682"/>
<dbReference type="KEGG" id="atu:Atu0644"/>
<dbReference type="PATRIC" id="fig|176299.10.peg.636"/>
<dbReference type="eggNOG" id="COG0751">
    <property type="taxonomic scope" value="Bacteria"/>
</dbReference>
<dbReference type="HOGENOM" id="CLU_007220_2_1_5"/>
<dbReference type="OrthoDB" id="9775440at2"/>
<dbReference type="PhylomeDB" id="A9CK39"/>
<dbReference type="BioCyc" id="AGRO:ATU0644-MONOMER"/>
<dbReference type="Proteomes" id="UP000000813">
    <property type="component" value="Chromosome circular"/>
</dbReference>
<dbReference type="GO" id="GO:0005829">
    <property type="term" value="C:cytosol"/>
    <property type="evidence" value="ECO:0007669"/>
    <property type="project" value="TreeGrafter"/>
</dbReference>
<dbReference type="GO" id="GO:0004814">
    <property type="term" value="F:arginine-tRNA ligase activity"/>
    <property type="evidence" value="ECO:0007669"/>
    <property type="project" value="InterPro"/>
</dbReference>
<dbReference type="GO" id="GO:0005524">
    <property type="term" value="F:ATP binding"/>
    <property type="evidence" value="ECO:0007669"/>
    <property type="project" value="UniProtKB-UniRule"/>
</dbReference>
<dbReference type="GO" id="GO:0004820">
    <property type="term" value="F:glycine-tRNA ligase activity"/>
    <property type="evidence" value="ECO:0007669"/>
    <property type="project" value="UniProtKB-UniRule"/>
</dbReference>
<dbReference type="GO" id="GO:0006420">
    <property type="term" value="P:arginyl-tRNA aminoacylation"/>
    <property type="evidence" value="ECO:0007669"/>
    <property type="project" value="InterPro"/>
</dbReference>
<dbReference type="GO" id="GO:0006426">
    <property type="term" value="P:glycyl-tRNA aminoacylation"/>
    <property type="evidence" value="ECO:0007669"/>
    <property type="project" value="UniProtKB-UniRule"/>
</dbReference>
<dbReference type="HAMAP" id="MF_00255">
    <property type="entry name" value="Gly_tRNA_synth_beta"/>
    <property type="match status" value="1"/>
</dbReference>
<dbReference type="InterPro" id="IPR008909">
    <property type="entry name" value="DALR_anticod-bd"/>
</dbReference>
<dbReference type="InterPro" id="IPR015944">
    <property type="entry name" value="Gly-tRNA-synth_bsu"/>
</dbReference>
<dbReference type="InterPro" id="IPR006194">
    <property type="entry name" value="Gly-tRNA-synth_heterodimer"/>
</dbReference>
<dbReference type="NCBIfam" id="TIGR00211">
    <property type="entry name" value="glyS"/>
    <property type="match status" value="1"/>
</dbReference>
<dbReference type="PANTHER" id="PTHR30075:SF2">
    <property type="entry name" value="GLYCINE--TRNA LIGASE, CHLOROPLASTIC_MITOCHONDRIAL 2"/>
    <property type="match status" value="1"/>
</dbReference>
<dbReference type="PANTHER" id="PTHR30075">
    <property type="entry name" value="GLYCYL-TRNA SYNTHETASE"/>
    <property type="match status" value="1"/>
</dbReference>
<dbReference type="Pfam" id="PF05746">
    <property type="entry name" value="DALR_1"/>
    <property type="match status" value="1"/>
</dbReference>
<dbReference type="Pfam" id="PF02092">
    <property type="entry name" value="tRNA_synt_2f"/>
    <property type="match status" value="1"/>
</dbReference>
<dbReference type="PRINTS" id="PR01045">
    <property type="entry name" value="TRNASYNTHGB"/>
</dbReference>
<dbReference type="SUPFAM" id="SSF109604">
    <property type="entry name" value="HD-domain/PDEase-like"/>
    <property type="match status" value="1"/>
</dbReference>
<dbReference type="PROSITE" id="PS50861">
    <property type="entry name" value="AA_TRNA_LIGASE_II_GLYAB"/>
    <property type="match status" value="1"/>
</dbReference>
<keyword id="KW-0030">Aminoacyl-tRNA synthetase</keyword>
<keyword id="KW-0067">ATP-binding</keyword>
<keyword id="KW-0963">Cytoplasm</keyword>
<keyword id="KW-0436">Ligase</keyword>
<keyword id="KW-0547">Nucleotide-binding</keyword>
<keyword id="KW-0648">Protein biosynthesis</keyword>
<keyword id="KW-1185">Reference proteome</keyword>
<accession>A9CK39</accession>
<proteinExistence type="inferred from homology"/>
<feature type="chain" id="PRO_1000101261" description="Glycine--tRNA ligase beta subunit">
    <location>
        <begin position="1"/>
        <end position="717"/>
    </location>
</feature>
<evidence type="ECO:0000255" key="1">
    <source>
        <dbReference type="HAMAP-Rule" id="MF_00255"/>
    </source>
</evidence>
<protein>
    <recommendedName>
        <fullName evidence="1">Glycine--tRNA ligase beta subunit</fullName>
        <ecNumber evidence="1">6.1.1.14</ecNumber>
    </recommendedName>
    <alternativeName>
        <fullName evidence="1">Glycyl-tRNA synthetase beta subunit</fullName>
        <shortName evidence="1">GlyRS</shortName>
    </alternativeName>
</protein>